<proteinExistence type="evidence at protein level"/>
<organism>
    <name type="scientific">Bos taurus</name>
    <name type="common">Bovine</name>
    <dbReference type="NCBI Taxonomy" id="9913"/>
    <lineage>
        <taxon>Eukaryota</taxon>
        <taxon>Metazoa</taxon>
        <taxon>Chordata</taxon>
        <taxon>Craniata</taxon>
        <taxon>Vertebrata</taxon>
        <taxon>Euteleostomi</taxon>
        <taxon>Mammalia</taxon>
        <taxon>Eutheria</taxon>
        <taxon>Laurasiatheria</taxon>
        <taxon>Artiodactyla</taxon>
        <taxon>Ruminantia</taxon>
        <taxon>Pecora</taxon>
        <taxon>Bovidae</taxon>
        <taxon>Bovinae</taxon>
        <taxon>Bos</taxon>
    </lineage>
</organism>
<keyword id="KW-0002">3D-structure</keyword>
<keyword id="KW-0145">Chemotaxis</keyword>
<keyword id="KW-0202">Cytokine</keyword>
<keyword id="KW-0903">Direct protein sequencing</keyword>
<keyword id="KW-1015">Disulfide bond</keyword>
<keyword id="KW-0325">Glycoprotein</keyword>
<keyword id="KW-0358">Heparin-binding</keyword>
<keyword id="KW-0597">Phosphoprotein</keyword>
<keyword id="KW-0654">Proteoglycan</keyword>
<keyword id="KW-1185">Reference proteome</keyword>
<keyword id="KW-0964">Secreted</keyword>
<reference key="1">
    <citation type="journal article" date="1986" name="Arch. Biochem. Biophys.">
        <title>Isolation and amino acid sequence of bovine platelet factor 4.</title>
        <authorList>
            <person name="Ciaglowski R.E."/>
            <person name="Snow J."/>
            <person name="Walz D.A."/>
        </authorList>
    </citation>
    <scope>PROTEIN SEQUENCE</scope>
</reference>
<reference key="2">
    <citation type="journal article" date="1991" name="Biochim. Biophys. Acta">
        <title>1H-NMR studies of bovine platelet factor 4: histidine assignments and interactions with heparin.</title>
        <authorList>
            <person name="Talpas C.J."/>
            <person name="Walz D.A."/>
            <person name="Lee L."/>
        </authorList>
    </citation>
    <scope>STRUCTURE BY NMR</scope>
</reference>
<reference key="3">
    <citation type="journal article" date="1989" name="J. Biol. Chem.">
        <title>The three-dimensional structure of bovine platelet factor 4 at 3.0-A resolution.</title>
        <authorList>
            <person name="St Charles R."/>
            <person name="Walz D.A."/>
            <person name="Edwards B.F.P."/>
        </authorList>
    </citation>
    <scope>X-RAY CRYSTALLOGRAPHY (3.0 ANGSTROMS)</scope>
    <scope>GLYCOSYLATION</scope>
</reference>
<reference key="4">
    <citation type="journal article" date="1992" name="Proteins">
        <title>A model of the platelet factor 4 complex with heparin.</title>
        <authorList>
            <person name="Stuckey J.A."/>
            <person name="St Charles R."/>
            <person name="Edwards B.F.P."/>
        </authorList>
    </citation>
    <scope>X-RAY CRYSTALLOGRAPHY (2.6 ANGSTROMS)</scope>
</reference>
<evidence type="ECO:0000250" key="1"/>
<evidence type="ECO:0000250" key="2">
    <source>
        <dbReference type="UniProtKB" id="P02776"/>
    </source>
</evidence>
<evidence type="ECO:0000250" key="3">
    <source>
        <dbReference type="UniProtKB" id="P06765"/>
    </source>
</evidence>
<evidence type="ECO:0000269" key="4">
    <source>
    </source>
</evidence>
<evidence type="ECO:0000305" key="5"/>
<evidence type="ECO:0007829" key="6">
    <source>
        <dbReference type="PDB" id="1PLF"/>
    </source>
</evidence>
<name>PLF4_BOVIN</name>
<gene>
    <name type="primary">PF4</name>
    <name type="synonym">CXCL4</name>
    <name type="synonym">SCYB4</name>
</gene>
<sequence>ESSFPATFVPLPADSEGGEDEDLQCVCLKTTSGINPRHISSLEVIGAGTHCPSPQLLATKKTGRKICLDQQRPLYKKILKKLLDGDES</sequence>
<comment type="function">
    <text evidence="2">Chemokine released during platelet aggregation that plays a role in different biological processes including hematopoiesis, cell proliferation, differentiation, and activation. Acts via different functional receptors including CCR1, CXCR3A or CXCR3B. Upon interaction with CXCR3A receptor, induces activated T-lymphocytes migration mediated via downstream Ras/extracellular signal-regulated kinase (ERK) signaling. Neutralizes the anticoagulant effect of heparin by binding more strongly to heparin than to the chondroitin-4-sulfate chains of the carrier molecule. Plays a role in the inhibition of hematopoiesis and in the maintenance of hematopoietic stem cell (HSC) quiescence. Chemotactic for neutrophils and monocytes via CCR1. Inhibits endothelial cell proliferation. In cooperation with toll-like receptor 8/TLR8, induces chromatin remodeling and activates inflammatory gene expression via the TBK1-IRF5 axis. In addition, induces myofibroblast differentiation and collagen synthesis in different precursor cells, including endothelial cells, by stimulating endothelial-to-mesenchymal transition. Interacts with thrombomodulin/THBD to enhance the activation of protein C and thus potentiates its anticoagulant activity.</text>
</comment>
<comment type="subunit">
    <text evidence="2">Homotetramer. Interacts with TNFAIP6 (via Link domain). Interacts with CCR1. Interacts with CXCR3. Interacts with THBD; this interaction enhances generation of activated protein C.</text>
</comment>
<comment type="subcellular location">
    <subcellularLocation>
        <location>Secreted</location>
    </subcellularLocation>
</comment>
<comment type="PTM">
    <text evidence="4">O-linked glycan consists of Gal-GalNAc disaccharide which is modified with sialic acid residues (microheterogeneity).</text>
</comment>
<comment type="similarity">
    <text evidence="5">Belongs to the intercrine alpha (chemokine CxC) family.</text>
</comment>
<accession>P02777</accession>
<protein>
    <recommendedName>
        <fullName>Platelet factor 4</fullName>
        <shortName>PF-4</shortName>
    </recommendedName>
    <alternativeName>
        <fullName>C-X-C motif chemokine 4</fullName>
    </alternativeName>
</protein>
<dbReference type="PIR" id="A03242">
    <property type="entry name" value="PFBO4"/>
</dbReference>
<dbReference type="PDB" id="1PLF">
    <property type="method" value="X-ray"/>
    <property type="resolution" value="2.20 A"/>
    <property type="chains" value="A/B/C/D=14-83"/>
</dbReference>
<dbReference type="PDBsum" id="1PLF"/>
<dbReference type="SMR" id="P02777"/>
<dbReference type="FunCoup" id="P02777">
    <property type="interactions" value="118"/>
</dbReference>
<dbReference type="STRING" id="9913.ENSBTAP00000015874"/>
<dbReference type="GlyCosmos" id="P02777">
    <property type="glycosylation" value="1 site, No reported glycans"/>
</dbReference>
<dbReference type="GlyGen" id="P02777">
    <property type="glycosylation" value="1 site"/>
</dbReference>
<dbReference type="iPTMnet" id="P02777"/>
<dbReference type="PaxDb" id="9913-ENSBTAP00000015874"/>
<dbReference type="eggNOG" id="ENOG502TF57">
    <property type="taxonomic scope" value="Eukaryota"/>
</dbReference>
<dbReference type="InParanoid" id="P02777"/>
<dbReference type="OrthoDB" id="9937393at2759"/>
<dbReference type="EvolutionaryTrace" id="P02777"/>
<dbReference type="Proteomes" id="UP000009136">
    <property type="component" value="Unplaced"/>
</dbReference>
<dbReference type="GO" id="GO:0005615">
    <property type="term" value="C:extracellular space"/>
    <property type="evidence" value="ECO:0000318"/>
    <property type="project" value="GO_Central"/>
</dbReference>
<dbReference type="GO" id="GO:0008009">
    <property type="term" value="F:chemokine activity"/>
    <property type="evidence" value="ECO:0000318"/>
    <property type="project" value="GO_Central"/>
</dbReference>
<dbReference type="GO" id="GO:0045236">
    <property type="term" value="F:CXCR chemokine receptor binding"/>
    <property type="evidence" value="ECO:0000318"/>
    <property type="project" value="GO_Central"/>
</dbReference>
<dbReference type="GO" id="GO:0048248">
    <property type="term" value="F:CXCR3 chemokine receptor binding"/>
    <property type="evidence" value="ECO:0000250"/>
    <property type="project" value="UniProtKB"/>
</dbReference>
<dbReference type="GO" id="GO:0008201">
    <property type="term" value="F:heparin binding"/>
    <property type="evidence" value="ECO:0000250"/>
    <property type="project" value="UniProtKB"/>
</dbReference>
<dbReference type="GO" id="GO:0007189">
    <property type="term" value="P:adenylate cyclase-activating G protein-coupled receptor signaling pathway"/>
    <property type="evidence" value="ECO:0000250"/>
    <property type="project" value="UniProtKB"/>
</dbReference>
<dbReference type="GO" id="GO:0061844">
    <property type="term" value="P:antimicrobial humoral immune response mediated by antimicrobial peptide"/>
    <property type="evidence" value="ECO:0000318"/>
    <property type="project" value="GO_Central"/>
</dbReference>
<dbReference type="GO" id="GO:0071222">
    <property type="term" value="P:cellular response to lipopolysaccharide"/>
    <property type="evidence" value="ECO:0000318"/>
    <property type="project" value="GO_Central"/>
</dbReference>
<dbReference type="GO" id="GO:0019221">
    <property type="term" value="P:cytokine-mediated signaling pathway"/>
    <property type="evidence" value="ECO:0000250"/>
    <property type="project" value="UniProtKB"/>
</dbReference>
<dbReference type="GO" id="GO:0006954">
    <property type="term" value="P:inflammatory response"/>
    <property type="evidence" value="ECO:0000318"/>
    <property type="project" value="GO_Central"/>
</dbReference>
<dbReference type="GO" id="GO:0030595">
    <property type="term" value="P:leukocyte chemotaxis"/>
    <property type="evidence" value="ECO:0000250"/>
    <property type="project" value="UniProtKB"/>
</dbReference>
<dbReference type="GO" id="GO:0016525">
    <property type="term" value="P:negative regulation of angiogenesis"/>
    <property type="evidence" value="ECO:0000250"/>
    <property type="project" value="UniProtKB"/>
</dbReference>
<dbReference type="GO" id="GO:0045653">
    <property type="term" value="P:negative regulation of megakaryocyte differentiation"/>
    <property type="evidence" value="ECO:0000250"/>
    <property type="project" value="UniProtKB"/>
</dbReference>
<dbReference type="GO" id="GO:0030593">
    <property type="term" value="P:neutrophil chemotaxis"/>
    <property type="evidence" value="ECO:0000318"/>
    <property type="project" value="GO_Central"/>
</dbReference>
<dbReference type="GO" id="GO:0030168">
    <property type="term" value="P:platelet activation"/>
    <property type="evidence" value="ECO:0000250"/>
    <property type="project" value="UniProtKB"/>
</dbReference>
<dbReference type="GO" id="GO:0045944">
    <property type="term" value="P:positive regulation of transcription by RNA polymerase II"/>
    <property type="evidence" value="ECO:0000250"/>
    <property type="project" value="UniProtKB"/>
</dbReference>
<dbReference type="GO" id="GO:0042127">
    <property type="term" value="P:regulation of cell population proliferation"/>
    <property type="evidence" value="ECO:0000250"/>
    <property type="project" value="UniProtKB"/>
</dbReference>
<dbReference type="CDD" id="cd00273">
    <property type="entry name" value="Chemokine_CXC"/>
    <property type="match status" value="1"/>
</dbReference>
<dbReference type="FunFam" id="2.40.50.40:FF:000004">
    <property type="entry name" value="C-X-C motif chemokine"/>
    <property type="match status" value="1"/>
</dbReference>
<dbReference type="Gene3D" id="2.40.50.40">
    <property type="match status" value="1"/>
</dbReference>
<dbReference type="InterPro" id="IPR039809">
    <property type="entry name" value="Chemokine_b/g/d"/>
</dbReference>
<dbReference type="InterPro" id="IPR001089">
    <property type="entry name" value="Chemokine_CXC"/>
</dbReference>
<dbReference type="InterPro" id="IPR018048">
    <property type="entry name" value="Chemokine_CXC_CS"/>
</dbReference>
<dbReference type="InterPro" id="IPR001811">
    <property type="entry name" value="Chemokine_IL8-like_dom"/>
</dbReference>
<dbReference type="InterPro" id="IPR033899">
    <property type="entry name" value="CXC_Chemokine_domain"/>
</dbReference>
<dbReference type="InterPro" id="IPR036048">
    <property type="entry name" value="Interleukin_8-like_sf"/>
</dbReference>
<dbReference type="PANTHER" id="PTHR12015:SF211">
    <property type="entry name" value="PLATELET FACTOR 4"/>
    <property type="match status" value="1"/>
</dbReference>
<dbReference type="PANTHER" id="PTHR12015">
    <property type="entry name" value="SMALL INDUCIBLE CYTOKINE A"/>
    <property type="match status" value="1"/>
</dbReference>
<dbReference type="Pfam" id="PF00048">
    <property type="entry name" value="IL8"/>
    <property type="match status" value="1"/>
</dbReference>
<dbReference type="PRINTS" id="PR00436">
    <property type="entry name" value="INTERLEUKIN8"/>
</dbReference>
<dbReference type="PRINTS" id="PR00437">
    <property type="entry name" value="SMALLCYTKCXC"/>
</dbReference>
<dbReference type="SMART" id="SM00199">
    <property type="entry name" value="SCY"/>
    <property type="match status" value="1"/>
</dbReference>
<dbReference type="SUPFAM" id="SSF54117">
    <property type="entry name" value="Interleukin 8-like chemokines"/>
    <property type="match status" value="1"/>
</dbReference>
<dbReference type="PROSITE" id="PS00471">
    <property type="entry name" value="SMALL_CYTOKINES_CXC"/>
    <property type="match status" value="1"/>
</dbReference>
<feature type="chain" id="PRO_0000144298" description="Platelet factor 4">
    <location>
        <begin position="1"/>
        <end position="88"/>
    </location>
</feature>
<feature type="binding site" evidence="1">
    <location>
        <begin position="76"/>
        <end position="82"/>
    </location>
    <ligand>
        <name>heparin</name>
        <dbReference type="ChEBI" id="CHEBI:28304"/>
    </ligand>
</feature>
<feature type="modified residue" description="Phosphoserine" evidence="3">
    <location>
        <position position="41"/>
    </location>
</feature>
<feature type="glycosylation site" description="O-linked (GalNAc...) threonine" evidence="4">
    <location>
        <position position="7"/>
    </location>
</feature>
<feature type="disulfide bond">
    <location>
        <begin position="25"/>
        <end position="51"/>
    </location>
</feature>
<feature type="disulfide bond">
    <location>
        <begin position="27"/>
        <end position="67"/>
    </location>
</feature>
<feature type="helix" evidence="6">
    <location>
        <begin position="36"/>
        <end position="38"/>
    </location>
</feature>
<feature type="strand" evidence="6">
    <location>
        <begin position="39"/>
        <end position="45"/>
    </location>
</feature>
<feature type="strand" evidence="6">
    <location>
        <begin position="55"/>
        <end position="60"/>
    </location>
</feature>
<feature type="strand" evidence="6">
    <location>
        <begin position="65"/>
        <end position="68"/>
    </location>
</feature>
<feature type="strand" evidence="6">
    <location>
        <begin position="70"/>
        <end position="72"/>
    </location>
</feature>
<feature type="helix" evidence="6">
    <location>
        <begin position="74"/>
        <end position="83"/>
    </location>
</feature>